<protein>
    <recommendedName>
        <fullName evidence="1">Imidazole glycerol phosphate synthase subunit HisH</fullName>
        <ecNumber evidence="1">4.3.2.10</ecNumber>
    </recommendedName>
    <alternativeName>
        <fullName evidence="1">IGP synthase glutaminase subunit</fullName>
        <ecNumber evidence="1">3.5.1.2</ecNumber>
    </alternativeName>
    <alternativeName>
        <fullName evidence="1">IGP synthase subunit HisH</fullName>
    </alternativeName>
    <alternativeName>
        <fullName evidence="1">ImGP synthase subunit HisH</fullName>
        <shortName evidence="1">IGPS subunit HisH</shortName>
    </alternativeName>
</protein>
<feature type="chain" id="PRO_0000231740" description="Imidazole glycerol phosphate synthase subunit HisH">
    <location>
        <begin position="1"/>
        <end position="212"/>
    </location>
</feature>
<feature type="domain" description="Glutamine amidotransferase type-1" evidence="1">
    <location>
        <begin position="3"/>
        <end position="212"/>
    </location>
</feature>
<feature type="active site" description="Nucleophile" evidence="1">
    <location>
        <position position="82"/>
    </location>
</feature>
<feature type="active site" evidence="1">
    <location>
        <position position="191"/>
    </location>
</feature>
<feature type="active site" evidence="1">
    <location>
        <position position="193"/>
    </location>
</feature>
<sequence length="212" mass="23171">MTDIAIVDYGMGNLRSVAKALEHVAPEAVIAVTNNPEVVRKAERVVVPGQGAMPDCLRELDRLGLREAVRDAAANKPFLGICIGLQMLFDSSEEGNVSGLGIVPGRVKRFPASAMKDEKGQKLKVPHMGWNQVHQSVGHSLWKNIANDSRFYFVHSYYVEPADADSAGHSAYPFSFTCAVAKDNIFAVQFHPEKSHAAGLTLLGNFVRWKPV</sequence>
<evidence type="ECO:0000255" key="1">
    <source>
        <dbReference type="HAMAP-Rule" id="MF_00278"/>
    </source>
</evidence>
<name>HIS5_NITMU</name>
<accession>Q2YAU8</accession>
<gene>
    <name evidence="1" type="primary">hisH</name>
    <name type="ordered locus">Nmul_A0816</name>
</gene>
<dbReference type="EC" id="4.3.2.10" evidence="1"/>
<dbReference type="EC" id="3.5.1.2" evidence="1"/>
<dbReference type="EMBL" id="CP000103">
    <property type="protein sequence ID" value="ABB74123.1"/>
    <property type="molecule type" value="Genomic_DNA"/>
</dbReference>
<dbReference type="RefSeq" id="WP_011380171.1">
    <property type="nucleotide sequence ID" value="NC_007614.1"/>
</dbReference>
<dbReference type="SMR" id="Q2YAU8"/>
<dbReference type="STRING" id="323848.Nmul_A0816"/>
<dbReference type="KEGG" id="nmu:Nmul_A0816"/>
<dbReference type="eggNOG" id="COG0118">
    <property type="taxonomic scope" value="Bacteria"/>
</dbReference>
<dbReference type="HOGENOM" id="CLU_071837_2_0_4"/>
<dbReference type="OrthoDB" id="9807137at2"/>
<dbReference type="UniPathway" id="UPA00031">
    <property type="reaction ID" value="UER00010"/>
</dbReference>
<dbReference type="Proteomes" id="UP000002718">
    <property type="component" value="Chromosome"/>
</dbReference>
<dbReference type="GO" id="GO:0005737">
    <property type="term" value="C:cytoplasm"/>
    <property type="evidence" value="ECO:0007669"/>
    <property type="project" value="UniProtKB-SubCell"/>
</dbReference>
<dbReference type="GO" id="GO:0004359">
    <property type="term" value="F:glutaminase activity"/>
    <property type="evidence" value="ECO:0007669"/>
    <property type="project" value="UniProtKB-EC"/>
</dbReference>
<dbReference type="GO" id="GO:0000107">
    <property type="term" value="F:imidazoleglycerol-phosphate synthase activity"/>
    <property type="evidence" value="ECO:0007669"/>
    <property type="project" value="UniProtKB-UniRule"/>
</dbReference>
<dbReference type="GO" id="GO:0016829">
    <property type="term" value="F:lyase activity"/>
    <property type="evidence" value="ECO:0007669"/>
    <property type="project" value="UniProtKB-KW"/>
</dbReference>
<dbReference type="GO" id="GO:0000105">
    <property type="term" value="P:L-histidine biosynthetic process"/>
    <property type="evidence" value="ECO:0007669"/>
    <property type="project" value="UniProtKB-UniRule"/>
</dbReference>
<dbReference type="CDD" id="cd01748">
    <property type="entry name" value="GATase1_IGP_Synthase"/>
    <property type="match status" value="1"/>
</dbReference>
<dbReference type="Gene3D" id="3.40.50.880">
    <property type="match status" value="1"/>
</dbReference>
<dbReference type="HAMAP" id="MF_00278">
    <property type="entry name" value="HisH"/>
    <property type="match status" value="1"/>
</dbReference>
<dbReference type="InterPro" id="IPR029062">
    <property type="entry name" value="Class_I_gatase-like"/>
</dbReference>
<dbReference type="InterPro" id="IPR017926">
    <property type="entry name" value="GATASE"/>
</dbReference>
<dbReference type="InterPro" id="IPR010139">
    <property type="entry name" value="Imidazole-glycPsynth_HisH"/>
</dbReference>
<dbReference type="NCBIfam" id="TIGR01855">
    <property type="entry name" value="IMP_synth_hisH"/>
    <property type="match status" value="1"/>
</dbReference>
<dbReference type="PANTHER" id="PTHR42701">
    <property type="entry name" value="IMIDAZOLE GLYCEROL PHOSPHATE SYNTHASE SUBUNIT HISH"/>
    <property type="match status" value="1"/>
</dbReference>
<dbReference type="PANTHER" id="PTHR42701:SF2">
    <property type="entry name" value="IMIDAZOLE GLYCEROL PHOSPHATE SYNTHASE SUBUNIT HISH 1"/>
    <property type="match status" value="1"/>
</dbReference>
<dbReference type="Pfam" id="PF00117">
    <property type="entry name" value="GATase"/>
    <property type="match status" value="1"/>
</dbReference>
<dbReference type="PIRSF" id="PIRSF000495">
    <property type="entry name" value="Amidotransf_hisH"/>
    <property type="match status" value="1"/>
</dbReference>
<dbReference type="SUPFAM" id="SSF52317">
    <property type="entry name" value="Class I glutamine amidotransferase-like"/>
    <property type="match status" value="1"/>
</dbReference>
<dbReference type="PROSITE" id="PS51273">
    <property type="entry name" value="GATASE_TYPE_1"/>
    <property type="match status" value="1"/>
</dbReference>
<comment type="function">
    <text evidence="1">IGPS catalyzes the conversion of PRFAR and glutamine to IGP, AICAR and glutamate. The HisH subunit catalyzes the hydrolysis of glutamine to glutamate and ammonia as part of the synthesis of IGP and AICAR. The resulting ammonia molecule is channeled to the active site of HisF.</text>
</comment>
<comment type="catalytic activity">
    <reaction evidence="1">
        <text>5-[(5-phospho-1-deoxy-D-ribulos-1-ylimino)methylamino]-1-(5-phospho-beta-D-ribosyl)imidazole-4-carboxamide + L-glutamine = D-erythro-1-(imidazol-4-yl)glycerol 3-phosphate + 5-amino-1-(5-phospho-beta-D-ribosyl)imidazole-4-carboxamide + L-glutamate + H(+)</text>
        <dbReference type="Rhea" id="RHEA:24793"/>
        <dbReference type="ChEBI" id="CHEBI:15378"/>
        <dbReference type="ChEBI" id="CHEBI:29985"/>
        <dbReference type="ChEBI" id="CHEBI:58278"/>
        <dbReference type="ChEBI" id="CHEBI:58359"/>
        <dbReference type="ChEBI" id="CHEBI:58475"/>
        <dbReference type="ChEBI" id="CHEBI:58525"/>
        <dbReference type="EC" id="4.3.2.10"/>
    </reaction>
</comment>
<comment type="catalytic activity">
    <reaction evidence="1">
        <text>L-glutamine + H2O = L-glutamate + NH4(+)</text>
        <dbReference type="Rhea" id="RHEA:15889"/>
        <dbReference type="ChEBI" id="CHEBI:15377"/>
        <dbReference type="ChEBI" id="CHEBI:28938"/>
        <dbReference type="ChEBI" id="CHEBI:29985"/>
        <dbReference type="ChEBI" id="CHEBI:58359"/>
        <dbReference type="EC" id="3.5.1.2"/>
    </reaction>
</comment>
<comment type="pathway">
    <text evidence="1">Amino-acid biosynthesis; L-histidine biosynthesis; L-histidine from 5-phospho-alpha-D-ribose 1-diphosphate: step 5/9.</text>
</comment>
<comment type="subunit">
    <text evidence="1">Heterodimer of HisH and HisF.</text>
</comment>
<comment type="subcellular location">
    <subcellularLocation>
        <location evidence="1">Cytoplasm</location>
    </subcellularLocation>
</comment>
<reference key="1">
    <citation type="submission" date="2005-08" db="EMBL/GenBank/DDBJ databases">
        <title>Complete sequence of chromosome 1 of Nitrosospira multiformis ATCC 25196.</title>
        <authorList>
            <person name="Copeland A."/>
            <person name="Lucas S."/>
            <person name="Lapidus A."/>
            <person name="Barry K."/>
            <person name="Detter J.C."/>
            <person name="Glavina T."/>
            <person name="Hammon N."/>
            <person name="Israni S."/>
            <person name="Pitluck S."/>
            <person name="Chain P."/>
            <person name="Malfatti S."/>
            <person name="Shin M."/>
            <person name="Vergez L."/>
            <person name="Schmutz J."/>
            <person name="Larimer F."/>
            <person name="Land M."/>
            <person name="Hauser L."/>
            <person name="Kyrpides N."/>
            <person name="Lykidis A."/>
            <person name="Richardson P."/>
        </authorList>
    </citation>
    <scope>NUCLEOTIDE SEQUENCE [LARGE SCALE GENOMIC DNA]</scope>
    <source>
        <strain>ATCC 25196 / NCIMB 11849 / C 71</strain>
    </source>
</reference>
<organism>
    <name type="scientific">Nitrosospira multiformis (strain ATCC 25196 / NCIMB 11849 / C 71)</name>
    <dbReference type="NCBI Taxonomy" id="323848"/>
    <lineage>
        <taxon>Bacteria</taxon>
        <taxon>Pseudomonadati</taxon>
        <taxon>Pseudomonadota</taxon>
        <taxon>Betaproteobacteria</taxon>
        <taxon>Nitrosomonadales</taxon>
        <taxon>Nitrosomonadaceae</taxon>
        <taxon>Nitrosospira</taxon>
    </lineage>
</organism>
<keyword id="KW-0028">Amino-acid biosynthesis</keyword>
<keyword id="KW-0963">Cytoplasm</keyword>
<keyword id="KW-0315">Glutamine amidotransferase</keyword>
<keyword id="KW-0368">Histidine biosynthesis</keyword>
<keyword id="KW-0378">Hydrolase</keyword>
<keyword id="KW-0456">Lyase</keyword>
<keyword id="KW-1185">Reference proteome</keyword>
<proteinExistence type="inferred from homology"/>